<keyword id="KW-0227">DNA damage</keyword>
<keyword id="KW-0233">DNA recombination</keyword>
<keyword id="KW-0234">DNA repair</keyword>
<keyword id="KW-0479">Metal-binding</keyword>
<keyword id="KW-0862">Zinc</keyword>
<keyword id="KW-0863">Zinc-finger</keyword>
<comment type="function">
    <text evidence="1">May play a role in DNA repair. It seems to be involved in an RecBC-independent recombinational process of DNA repair. It may act with RecF and RecO.</text>
</comment>
<comment type="similarity">
    <text evidence="1">Belongs to the RecR family.</text>
</comment>
<name>RECR_RHOP5</name>
<sequence>MATAVAGPEIERLIQLLSRLPGLGPRSARRAALHLIKKREALMAPLASALQVAIERIQVCKTCGNIDTQNPCTVCTDPRRDPAIIVVVADVADLWALERAHASNGRYHVLGATLSPLDGVGPQDLTIDALVARAHDPQVSEIVLALNATVDGQTTAHYITDLLMEANVKVTRLAHGVPVGGELDYLDEGTLSAAMRQRTLF</sequence>
<protein>
    <recommendedName>
        <fullName evidence="1">Recombination protein RecR</fullName>
    </recommendedName>
</protein>
<accession>Q07H54</accession>
<feature type="chain" id="PRO_0000322942" description="Recombination protein RecR">
    <location>
        <begin position="1"/>
        <end position="201"/>
    </location>
</feature>
<feature type="domain" description="Toprim" evidence="1">
    <location>
        <begin position="83"/>
        <end position="178"/>
    </location>
</feature>
<feature type="zinc finger region" description="C4-type" evidence="1">
    <location>
        <begin position="60"/>
        <end position="75"/>
    </location>
</feature>
<proteinExistence type="inferred from homology"/>
<organism>
    <name type="scientific">Rhodopseudomonas palustris (strain BisA53)</name>
    <dbReference type="NCBI Taxonomy" id="316055"/>
    <lineage>
        <taxon>Bacteria</taxon>
        <taxon>Pseudomonadati</taxon>
        <taxon>Pseudomonadota</taxon>
        <taxon>Alphaproteobacteria</taxon>
        <taxon>Hyphomicrobiales</taxon>
        <taxon>Nitrobacteraceae</taxon>
        <taxon>Rhodopseudomonas</taxon>
    </lineage>
</organism>
<reference key="1">
    <citation type="submission" date="2006-09" db="EMBL/GenBank/DDBJ databases">
        <title>Complete sequence of Rhodopseudomonas palustris BisA53.</title>
        <authorList>
            <consortium name="US DOE Joint Genome Institute"/>
            <person name="Copeland A."/>
            <person name="Lucas S."/>
            <person name="Lapidus A."/>
            <person name="Barry K."/>
            <person name="Detter J.C."/>
            <person name="Glavina del Rio T."/>
            <person name="Hammon N."/>
            <person name="Israni S."/>
            <person name="Dalin E."/>
            <person name="Tice H."/>
            <person name="Pitluck S."/>
            <person name="Chain P."/>
            <person name="Malfatti S."/>
            <person name="Shin M."/>
            <person name="Vergez L."/>
            <person name="Schmutz J."/>
            <person name="Larimer F."/>
            <person name="Land M."/>
            <person name="Hauser L."/>
            <person name="Pelletier D.A."/>
            <person name="Kyrpides N."/>
            <person name="Kim E."/>
            <person name="Harwood C.S."/>
            <person name="Oda Y."/>
            <person name="Richardson P."/>
        </authorList>
    </citation>
    <scope>NUCLEOTIDE SEQUENCE [LARGE SCALE GENOMIC DNA]</scope>
    <source>
        <strain>BisA53</strain>
    </source>
</reference>
<evidence type="ECO:0000255" key="1">
    <source>
        <dbReference type="HAMAP-Rule" id="MF_00017"/>
    </source>
</evidence>
<dbReference type="EMBL" id="CP000463">
    <property type="protein sequence ID" value="ABJ08730.1"/>
    <property type="molecule type" value="Genomic_DNA"/>
</dbReference>
<dbReference type="SMR" id="Q07H54"/>
<dbReference type="STRING" id="316055.RPE_4811"/>
<dbReference type="KEGG" id="rpe:RPE_4811"/>
<dbReference type="eggNOG" id="COG0353">
    <property type="taxonomic scope" value="Bacteria"/>
</dbReference>
<dbReference type="HOGENOM" id="CLU_060739_1_1_5"/>
<dbReference type="OrthoDB" id="9802672at2"/>
<dbReference type="GO" id="GO:0003677">
    <property type="term" value="F:DNA binding"/>
    <property type="evidence" value="ECO:0007669"/>
    <property type="project" value="UniProtKB-UniRule"/>
</dbReference>
<dbReference type="GO" id="GO:0008270">
    <property type="term" value="F:zinc ion binding"/>
    <property type="evidence" value="ECO:0007669"/>
    <property type="project" value="UniProtKB-KW"/>
</dbReference>
<dbReference type="GO" id="GO:0006310">
    <property type="term" value="P:DNA recombination"/>
    <property type="evidence" value="ECO:0007669"/>
    <property type="project" value="UniProtKB-UniRule"/>
</dbReference>
<dbReference type="GO" id="GO:0006281">
    <property type="term" value="P:DNA repair"/>
    <property type="evidence" value="ECO:0007669"/>
    <property type="project" value="UniProtKB-UniRule"/>
</dbReference>
<dbReference type="CDD" id="cd01025">
    <property type="entry name" value="TOPRIM_recR"/>
    <property type="match status" value="1"/>
</dbReference>
<dbReference type="Gene3D" id="3.40.1360.10">
    <property type="match status" value="1"/>
</dbReference>
<dbReference type="Gene3D" id="6.10.250.240">
    <property type="match status" value="1"/>
</dbReference>
<dbReference type="Gene3D" id="1.10.8.420">
    <property type="entry name" value="RecR Domain 1"/>
    <property type="match status" value="1"/>
</dbReference>
<dbReference type="HAMAP" id="MF_00017">
    <property type="entry name" value="RecR"/>
    <property type="match status" value="1"/>
</dbReference>
<dbReference type="InterPro" id="IPR000093">
    <property type="entry name" value="DNA_Rcmb_RecR"/>
</dbReference>
<dbReference type="InterPro" id="IPR023627">
    <property type="entry name" value="Rcmb_RecR"/>
</dbReference>
<dbReference type="InterPro" id="IPR015967">
    <property type="entry name" value="Rcmb_RecR_Znf"/>
</dbReference>
<dbReference type="InterPro" id="IPR006171">
    <property type="entry name" value="TOPRIM_dom"/>
</dbReference>
<dbReference type="InterPro" id="IPR034137">
    <property type="entry name" value="TOPRIM_RecR"/>
</dbReference>
<dbReference type="NCBIfam" id="TIGR00615">
    <property type="entry name" value="recR"/>
    <property type="match status" value="1"/>
</dbReference>
<dbReference type="PANTHER" id="PTHR30446">
    <property type="entry name" value="RECOMBINATION PROTEIN RECR"/>
    <property type="match status" value="1"/>
</dbReference>
<dbReference type="PANTHER" id="PTHR30446:SF0">
    <property type="entry name" value="RECOMBINATION PROTEIN RECR"/>
    <property type="match status" value="1"/>
</dbReference>
<dbReference type="Pfam" id="PF21175">
    <property type="entry name" value="RecR_C"/>
    <property type="match status" value="1"/>
</dbReference>
<dbReference type="Pfam" id="PF21176">
    <property type="entry name" value="RecR_HhH"/>
    <property type="match status" value="1"/>
</dbReference>
<dbReference type="Pfam" id="PF02132">
    <property type="entry name" value="RecR_ZnF"/>
    <property type="match status" value="1"/>
</dbReference>
<dbReference type="Pfam" id="PF13662">
    <property type="entry name" value="Toprim_4"/>
    <property type="match status" value="1"/>
</dbReference>
<dbReference type="SUPFAM" id="SSF111304">
    <property type="entry name" value="Recombination protein RecR"/>
    <property type="match status" value="1"/>
</dbReference>
<dbReference type="PROSITE" id="PS01300">
    <property type="entry name" value="RECR"/>
    <property type="match status" value="1"/>
</dbReference>
<dbReference type="PROSITE" id="PS50880">
    <property type="entry name" value="TOPRIM"/>
    <property type="match status" value="1"/>
</dbReference>
<gene>
    <name evidence="1" type="primary">recR</name>
    <name type="ordered locus">RPE_4811</name>
</gene>